<feature type="chain" id="PRO_0000068779" description="Isocitrate lyase">
    <location>
        <begin position="1"/>
        <end position="428"/>
    </location>
</feature>
<feature type="active site" description="Proton acceptor" evidence="12">
    <location>
        <position position="191"/>
    </location>
</feature>
<feature type="binding site" evidence="2">
    <location>
        <begin position="91"/>
        <end position="93"/>
    </location>
    <ligand>
        <name>substrate</name>
    </ligand>
</feature>
<feature type="binding site" evidence="2">
    <location>
        <position position="153"/>
    </location>
    <ligand>
        <name>Mg(2+)</name>
        <dbReference type="ChEBI" id="CHEBI:18420"/>
    </ligand>
</feature>
<feature type="binding site" evidence="2">
    <location>
        <begin position="192"/>
        <end position="193"/>
    </location>
    <ligand>
        <name>substrate</name>
    </ligand>
</feature>
<feature type="binding site" evidence="2">
    <location>
        <position position="228"/>
    </location>
    <ligand>
        <name>substrate</name>
    </ligand>
</feature>
<feature type="binding site" evidence="2">
    <location>
        <begin position="313"/>
        <end position="317"/>
    </location>
    <ligand>
        <name>substrate</name>
    </ligand>
</feature>
<feature type="binding site" evidence="2">
    <location>
        <position position="347"/>
    </location>
    <ligand>
        <name>substrate</name>
    </ligand>
</feature>
<feature type="cross-link" description="Isoglutamyl lysine isopeptide (Lys-Gln) (interchain with Q-Cter in protein Pup)" evidence="6">
    <location>
        <position position="334"/>
    </location>
</feature>
<feature type="mutagenesis site" description="Adopts a conformation almost identical to the wild-type." evidence="2">
    <original>C</original>
    <variation>S</variation>
    <location>
        <position position="191"/>
    </location>
</feature>
<feature type="helix" evidence="14">
    <location>
        <begin position="10"/>
        <end position="19"/>
    </location>
</feature>
<feature type="helix" evidence="14">
    <location>
        <begin position="21"/>
        <end position="23"/>
    </location>
</feature>
<feature type="helix" evidence="14">
    <location>
        <begin position="32"/>
        <end position="37"/>
    </location>
</feature>
<feature type="helix" evidence="14">
    <location>
        <begin position="47"/>
        <end position="62"/>
    </location>
</feature>
<feature type="strand" evidence="14">
    <location>
        <begin position="66"/>
        <end position="70"/>
    </location>
</feature>
<feature type="helix" evidence="14">
    <location>
        <begin position="74"/>
        <end position="82"/>
    </location>
</feature>
<feature type="strand" evidence="14">
    <location>
        <begin position="88"/>
        <end position="90"/>
    </location>
</feature>
<feature type="helix" evidence="14">
    <location>
        <begin position="92"/>
        <end position="98"/>
    </location>
</feature>
<feature type="strand" evidence="14">
    <location>
        <begin position="108"/>
        <end position="110"/>
    </location>
</feature>
<feature type="helix" evidence="14">
    <location>
        <begin position="116"/>
        <end position="138"/>
    </location>
</feature>
<feature type="strand" evidence="15">
    <location>
        <begin position="142"/>
        <end position="144"/>
    </location>
</feature>
<feature type="strand" evidence="14">
    <location>
        <begin position="150"/>
        <end position="153"/>
    </location>
</feature>
<feature type="turn" evidence="14">
    <location>
        <begin position="155"/>
        <end position="158"/>
    </location>
</feature>
<feature type="helix" evidence="14">
    <location>
        <begin position="161"/>
        <end position="173"/>
    </location>
</feature>
<feature type="strand" evidence="14">
    <location>
        <begin position="177"/>
        <end position="184"/>
    </location>
</feature>
<feature type="helix" evidence="14">
    <location>
        <begin position="186"/>
        <end position="188"/>
    </location>
</feature>
<feature type="helix" evidence="14">
    <location>
        <begin position="202"/>
        <end position="218"/>
    </location>
</feature>
<feature type="strand" evidence="14">
    <location>
        <begin position="224"/>
        <end position="229"/>
    </location>
</feature>
<feature type="turn" evidence="14">
    <location>
        <begin position="231"/>
        <end position="233"/>
    </location>
</feature>
<feature type="strand" evidence="14">
    <location>
        <begin position="236"/>
        <end position="238"/>
    </location>
</feature>
<feature type="turn" evidence="14">
    <location>
        <begin position="243"/>
        <end position="245"/>
    </location>
</feature>
<feature type="helix" evidence="14">
    <location>
        <begin position="246"/>
        <end position="248"/>
    </location>
</feature>
<feature type="strand" evidence="14">
    <location>
        <begin position="249"/>
        <end position="253"/>
    </location>
</feature>
<feature type="strand" evidence="14">
    <location>
        <begin position="259"/>
        <end position="261"/>
    </location>
</feature>
<feature type="helix" evidence="14">
    <location>
        <begin position="265"/>
        <end position="275"/>
    </location>
</feature>
<feature type="helix" evidence="14">
    <location>
        <begin position="276"/>
        <end position="278"/>
    </location>
</feature>
<feature type="strand" evidence="14">
    <location>
        <begin position="280"/>
        <end position="284"/>
    </location>
</feature>
<feature type="helix" evidence="14">
    <location>
        <begin position="291"/>
        <end position="304"/>
    </location>
</feature>
<feature type="strand" evidence="14">
    <location>
        <begin position="309"/>
        <end position="313"/>
    </location>
</feature>
<feature type="strand" evidence="13">
    <location>
        <begin position="316"/>
        <end position="318"/>
    </location>
</feature>
<feature type="helix" evidence="14">
    <location>
        <begin position="320"/>
        <end position="323"/>
    </location>
</feature>
<feature type="helix" evidence="14">
    <location>
        <begin position="326"/>
        <end position="338"/>
    </location>
</feature>
<feature type="strand" evidence="14">
    <location>
        <begin position="341"/>
        <end position="346"/>
    </location>
</feature>
<feature type="helix" evidence="14">
    <location>
        <begin position="349"/>
        <end position="368"/>
    </location>
</feature>
<feature type="helix" evidence="14">
    <location>
        <begin position="370"/>
        <end position="383"/>
    </location>
</feature>
<feature type="helix" evidence="14">
    <location>
        <begin position="384"/>
        <end position="386"/>
    </location>
</feature>
<feature type="helix" evidence="14">
    <location>
        <begin position="393"/>
        <end position="396"/>
    </location>
</feature>
<feature type="helix" evidence="14">
    <location>
        <begin position="399"/>
        <end position="409"/>
    </location>
</feature>
<feature type="helix" evidence="14">
    <location>
        <begin position="422"/>
        <end position="426"/>
    </location>
</feature>
<comment type="function">
    <text evidence="1 2 3 4 8">Involved in the persistence and virulence of M.tuberculosis. Catalyzes the reversible formation of succinate and glyoxylate from isocitrate, a key step of the glyoxylate cycle, which operates as an anaplerotic route for replenishing the tricarboxylic acid cycle during growth on fatty acid substrates (PubMed:10932251, PubMed:10963599, PubMed:18275086, PubMed:24354272). It could also catalyze the formation of pyruvate and succinate from 2-methylisocitrate, a key step in the methylcitrate cycle (propionate degradation route) (By similarity).</text>
</comment>
<comment type="catalytic activity">
    <reaction evidence="8">
        <text>D-threo-isocitrate = glyoxylate + succinate</text>
        <dbReference type="Rhea" id="RHEA:13245"/>
        <dbReference type="ChEBI" id="CHEBI:15562"/>
        <dbReference type="ChEBI" id="CHEBI:30031"/>
        <dbReference type="ChEBI" id="CHEBI:36655"/>
        <dbReference type="EC" id="4.1.3.1"/>
    </reaction>
</comment>
<comment type="cofactor">
    <cofactor evidence="2 4">
        <name>Mg(2+)</name>
        <dbReference type="ChEBI" id="CHEBI:18420"/>
    </cofactor>
    <text evidence="4">Can also use Mn(2+) ion.</text>
</comment>
<comment type="activity regulation">
    <text evidence="2 4 8">Inhibited by 3-nitropropionate (3-NP) and 3-bromopyruvate when M.tuberculosis grows on acetate, but not on glucose. Inhibition of ICL by 3-bromopyruvate is accomplished via dehalogenation of the inhibitor to form a covalent adduct with the active site Cys-191. Also inhibited by zinc and calcium ions.</text>
</comment>
<comment type="biophysicochemical properties">
    <kinetics>
        <KM evidence="8">45 uM for isocitrate (at pH 7 and 37 degrees Celsius)</KM>
        <KM evidence="8">140 uM for glyoxylate (at pH 7 and 37 degrees Celsius)</KM>
        <KM evidence="8">412 uM for succinate (at pH 7 and 37 degrees Celsius)</KM>
        <text evidence="8">kcat is 12.2 sec(-1) for isocitrate lyase activity with isocitrate as substrate(at pH 7 and 37 degrees Celsius). kcat is 8.5 sec(-1) for isocitrate lyase activity with succinate as substrate(at pH 7 and 37 degrees Celsius).</text>
    </kinetics>
</comment>
<comment type="pathway">
    <text evidence="11">Carbohydrate metabolism; glyoxylate cycle; (S)-malate from isocitrate: step 1/2.</text>
</comment>
<comment type="subunit">
    <text evidence="2">Homotetramer.</text>
</comment>
<comment type="induction">
    <text evidence="5 7">Activated by PrpR and repressed by RamB.</text>
</comment>
<comment type="PTM">
    <text evidence="6">Pupylated at Lys-334 by the prokaryotic ubiquitin-like protein Pup, which leads to its degradation by the proteasome.</text>
</comment>
<comment type="disruption phenotype">
    <text evidence="3">Cells lacking this gene show an attenuated bacterial persistence and virulence in immune-competent mice without affecting bacterial growth during the acute phase of infection.</text>
</comment>
<comment type="miscellaneous">
    <text evidence="6">Was identified as a natural substrate of the M.tuberculosis proteasome.</text>
</comment>
<comment type="similarity">
    <text evidence="10">Belongs to the isocitrate lyase/PEP mutase superfamily. Isocitrate lyase family.</text>
</comment>
<reference key="1">
    <citation type="journal article" date="1998" name="Nature">
        <title>Deciphering the biology of Mycobacterium tuberculosis from the complete genome sequence.</title>
        <authorList>
            <person name="Cole S.T."/>
            <person name="Brosch R."/>
            <person name="Parkhill J."/>
            <person name="Garnier T."/>
            <person name="Churcher C.M."/>
            <person name="Harris D.E."/>
            <person name="Gordon S.V."/>
            <person name="Eiglmeier K."/>
            <person name="Gas S."/>
            <person name="Barry C.E. III"/>
            <person name="Tekaia F."/>
            <person name="Badcock K."/>
            <person name="Basham D."/>
            <person name="Brown D."/>
            <person name="Chillingworth T."/>
            <person name="Connor R."/>
            <person name="Davies R.M."/>
            <person name="Devlin K."/>
            <person name="Feltwell T."/>
            <person name="Gentles S."/>
            <person name="Hamlin N."/>
            <person name="Holroyd S."/>
            <person name="Hornsby T."/>
            <person name="Jagels K."/>
            <person name="Krogh A."/>
            <person name="McLean J."/>
            <person name="Moule S."/>
            <person name="Murphy L.D."/>
            <person name="Oliver S."/>
            <person name="Osborne J."/>
            <person name="Quail M.A."/>
            <person name="Rajandream M.A."/>
            <person name="Rogers J."/>
            <person name="Rutter S."/>
            <person name="Seeger K."/>
            <person name="Skelton S."/>
            <person name="Squares S."/>
            <person name="Squares R."/>
            <person name="Sulston J.E."/>
            <person name="Taylor K."/>
            <person name="Whitehead S."/>
            <person name="Barrell B.G."/>
        </authorList>
    </citation>
    <scope>NUCLEOTIDE SEQUENCE [LARGE SCALE GENOMIC DNA]</scope>
    <source>
        <strain>ATCC 25618 / H37Rv</strain>
    </source>
</reference>
<reference key="2">
    <citation type="journal article" date="2000" name="Nature">
        <title>Persistence of Mycobacterium tuberculosis in macrophages and mice requires the glyoxylate shunt enzyme isocitrate lyase.</title>
        <authorList>
            <person name="McKinney J.D."/>
            <person name="Honer zu Bentrup K."/>
            <person name="Munoz-Elias E.J."/>
            <person name="Miczak A."/>
            <person name="Chen B."/>
            <person name="Chan W.T."/>
            <person name="Swenson D."/>
            <person name="Sacchettini J.C."/>
            <person name="Jacobs W.R. Jr."/>
            <person name="Russell D.G."/>
        </authorList>
    </citation>
    <scope>FUNCTION</scope>
    <scope>DISRUPTION PHENOTYPE</scope>
</reference>
<reference key="3">
    <citation type="journal article" date="2008" name="Proteins">
        <title>Mycobacterium tuberculosis isocitrate lyase (MtbIcl): role of divalent cations in modulation of functional and structural properties.</title>
        <authorList>
            <person name="Kumar R."/>
            <person name="Bhakuni V."/>
        </authorList>
    </citation>
    <scope>FUNCTION</scope>
    <scope>COFACTOR</scope>
    <scope>ACTIVITY REGULATION</scope>
</reference>
<reference key="4">
    <citation type="journal article" date="2010" name="PLoS ONE">
        <title>Prokaryotic ubiquitin-like protein (Pup) proteome of Mycobacterium tuberculosis.</title>
        <authorList>
            <person name="Festa R.A."/>
            <person name="McAllister F."/>
            <person name="Pearce M.J."/>
            <person name="Mintseris J."/>
            <person name="Burns K.E."/>
            <person name="Gygi S.P."/>
            <person name="Darwin K.H."/>
        </authorList>
    </citation>
    <scope>PROTEASOME SUBSTRATE</scope>
    <scope>PUPYLATION AT LYS-334</scope>
    <scope>IDENTIFICATION BY MASS SPECTROMETRY</scope>
    <source>
        <strain>ATCC 25618 / H37Rv</strain>
    </source>
</reference>
<reference key="5">
    <citation type="journal article" date="2011" name="Mol. Cell. Proteomics">
        <title>Proteogenomic analysis of Mycobacterium tuberculosis by high resolution mass spectrometry.</title>
        <authorList>
            <person name="Kelkar D.S."/>
            <person name="Kumar D."/>
            <person name="Kumar P."/>
            <person name="Balakrishnan L."/>
            <person name="Muthusamy B."/>
            <person name="Yadav A.K."/>
            <person name="Shrivastava P."/>
            <person name="Marimuthu A."/>
            <person name="Anand S."/>
            <person name="Sundaram H."/>
            <person name="Kingsbury R."/>
            <person name="Harsha H.C."/>
            <person name="Nair B."/>
            <person name="Prasad T.S."/>
            <person name="Chauhan D.S."/>
            <person name="Katoch K."/>
            <person name="Katoch V.M."/>
            <person name="Kumar P."/>
            <person name="Chaerkady R."/>
            <person name="Ramachandran S."/>
            <person name="Dash D."/>
            <person name="Pandey A."/>
        </authorList>
    </citation>
    <scope>IDENTIFICATION BY MASS SPECTROMETRY [LARGE SCALE ANALYSIS]</scope>
    <source>
        <strain>ATCC 25618 / H37Rv</strain>
    </source>
</reference>
<reference key="6">
    <citation type="journal article" date="2014" name="Biochemistry">
        <title>Cysteine is the general base that serves in catalysis by isocitrate lyase and in mechanism-based inhibition by 3-nitropropionate.</title>
        <authorList>
            <person name="Moynihan M.M."/>
            <person name="Murkin A.S."/>
        </authorList>
    </citation>
    <scope>FUNCTION</scope>
    <scope>CATALYTIC ACTIVITY</scope>
    <scope>BIOPHYSICOCHEMICAL PROPERTIES</scope>
    <scope>ACTIVITY REGULATION</scope>
    <scope>ACTIVE SITE</scope>
</reference>
<reference key="7">
    <citation type="journal article" date="2000" name="Nat. Struct. Biol.">
        <title>Structure of isocitrate lyase, a persistence factor of Mycobacterium tuberculosis.</title>
        <authorList>
            <person name="Sharma V."/>
            <person name="Sharma S."/>
            <person name="zu Bentrup K.H."/>
            <person name="McKinney J.D."/>
            <person name="Russell D.G."/>
            <person name="Jacobs W.R. Jr."/>
            <person name="Sacchettini J.C."/>
        </authorList>
    </citation>
    <scope>X-RAY CRYSTALLOGRAPHY (2.0 ANGSTROMS) OF WILD-TYPE AND MUTANT SER-191 IN COMPLEX WITH SUBSTRATES AND MAGNESIUM</scope>
    <scope>FUNCTION</scope>
    <scope>MUTAGENESIS OF CYS-191</scope>
    <scope>ACTIVITY REGULATION</scope>
    <scope>COFACTOR</scope>
    <scope>SUBUNIT</scope>
    <scope>REACTION MECHANISM</scope>
</reference>
<reference key="8">
    <citation type="journal article" date="2009" name="J. Bacteriol.">
        <title>Role of the transcriptional regulator RamB (Rv0465c) in the control of the glyoxylate cycle in Mycobacterium tuberculosis.</title>
        <authorList>
            <person name="Micklinghoff J.C."/>
            <person name="Breitinger K.J."/>
            <person name="Schmidt M."/>
            <person name="Geffers R."/>
            <person name="Eikmanns B.J."/>
            <person name="Bange F.C."/>
        </authorList>
    </citation>
    <scope>INDUCTION</scope>
    <source>
        <strain>ATCC 25618 / H37Rv</strain>
    </source>
</reference>
<reference key="9">
    <citation type="journal article" date="2012" name="PLoS ONE">
        <title>A novel role of the PrpR as a transcription factor involved in the regulation of methylcitrate pathway in Mycobacterium tuberculosis.</title>
        <authorList>
            <person name="Masiewicz P."/>
            <person name="Brzostek A."/>
            <person name="Wolanski M."/>
            <person name="Dziadek J."/>
            <person name="Zakrzewska-Czerwinska J."/>
        </authorList>
    </citation>
    <scope>INDUCTION</scope>
    <source>
        <strain>H37Rv</strain>
    </source>
</reference>
<organism>
    <name type="scientific">Mycobacterium tuberculosis (strain ATCC 25618 / H37Rv)</name>
    <dbReference type="NCBI Taxonomy" id="83332"/>
    <lineage>
        <taxon>Bacteria</taxon>
        <taxon>Bacillati</taxon>
        <taxon>Actinomycetota</taxon>
        <taxon>Actinomycetes</taxon>
        <taxon>Mycobacteriales</taxon>
        <taxon>Mycobacteriaceae</taxon>
        <taxon>Mycobacterium</taxon>
        <taxon>Mycobacterium tuberculosis complex</taxon>
    </lineage>
</organism>
<protein>
    <recommendedName>
        <fullName evidence="9">Isocitrate lyase</fullName>
        <shortName evidence="9">ICL</shortName>
        <ecNumber evidence="8">4.1.3.1</ecNumber>
    </recommendedName>
    <alternativeName>
        <fullName evidence="9">Isocitrase</fullName>
    </alternativeName>
    <alternativeName>
        <fullName evidence="9">Isocitratase</fullName>
    </alternativeName>
</protein>
<accession>P9WKK7</accession>
<accession>L0T3N9</accession>
<accession>O53752</accession>
<accession>P0A5H3</accession>
<proteinExistence type="evidence at protein level"/>
<name>ACEA_MYCTU</name>
<evidence type="ECO:0000250" key="1">
    <source>
        <dbReference type="UniProtKB" id="P9WKK6"/>
    </source>
</evidence>
<evidence type="ECO:0000269" key="2">
    <source>
    </source>
</evidence>
<evidence type="ECO:0000269" key="3">
    <source>
    </source>
</evidence>
<evidence type="ECO:0000269" key="4">
    <source>
    </source>
</evidence>
<evidence type="ECO:0000269" key="5">
    <source>
    </source>
</evidence>
<evidence type="ECO:0000269" key="6">
    <source>
    </source>
</evidence>
<evidence type="ECO:0000269" key="7">
    <source>
    </source>
</evidence>
<evidence type="ECO:0000269" key="8">
    <source>
    </source>
</evidence>
<evidence type="ECO:0000303" key="9">
    <source>
    </source>
</evidence>
<evidence type="ECO:0000305" key="10"/>
<evidence type="ECO:0000305" key="11">
    <source>
    </source>
</evidence>
<evidence type="ECO:0000305" key="12">
    <source>
    </source>
</evidence>
<evidence type="ECO:0007829" key="13">
    <source>
        <dbReference type="PDB" id="1F61"/>
    </source>
</evidence>
<evidence type="ECO:0007829" key="14">
    <source>
        <dbReference type="PDB" id="6XPP"/>
    </source>
</evidence>
<evidence type="ECO:0007829" key="15">
    <source>
        <dbReference type="PDB" id="7RB1"/>
    </source>
</evidence>
<dbReference type="EC" id="4.1.3.1" evidence="8"/>
<dbReference type="EMBL" id="AL123456">
    <property type="protein sequence ID" value="CCP43200.1"/>
    <property type="molecule type" value="Genomic_DNA"/>
</dbReference>
<dbReference type="PIR" id="G70828">
    <property type="entry name" value="G70828"/>
</dbReference>
<dbReference type="RefSeq" id="YP_177728.1">
    <property type="nucleotide sequence ID" value="NC_000962.3"/>
</dbReference>
<dbReference type="PDB" id="1F61">
    <property type="method" value="X-ray"/>
    <property type="resolution" value="2.00 A"/>
    <property type="chains" value="A/B=2-428"/>
</dbReference>
<dbReference type="PDB" id="1F8I">
    <property type="method" value="X-ray"/>
    <property type="resolution" value="2.25 A"/>
    <property type="chains" value="A/B/C/D=2-428"/>
</dbReference>
<dbReference type="PDB" id="1F8M">
    <property type="method" value="X-ray"/>
    <property type="resolution" value="1.80 A"/>
    <property type="chains" value="A/B/C/D=2-428"/>
</dbReference>
<dbReference type="PDB" id="5DQL">
    <property type="method" value="X-ray"/>
    <property type="resolution" value="1.78 A"/>
    <property type="chains" value="A/B/C/D=1-428"/>
</dbReference>
<dbReference type="PDB" id="6C4A">
    <property type="method" value="X-ray"/>
    <property type="resolution" value="1.80 A"/>
    <property type="chains" value="A/B/C/D/E/F/G/H=1-428"/>
</dbReference>
<dbReference type="PDB" id="6C4C">
    <property type="method" value="X-ray"/>
    <property type="resolution" value="2.20 A"/>
    <property type="chains" value="A/B/C/D/E/F/G/H=1-428"/>
</dbReference>
<dbReference type="PDB" id="6VB9">
    <property type="method" value="X-ray"/>
    <property type="resolution" value="1.88 A"/>
    <property type="chains" value="A/B/C/D=1-428"/>
</dbReference>
<dbReference type="PDB" id="6WSI">
    <property type="method" value="X-ray"/>
    <property type="resolution" value="1.75 A"/>
    <property type="chains" value="A/B/C/D=1-428"/>
</dbReference>
<dbReference type="PDB" id="6XPP">
    <property type="method" value="X-ray"/>
    <property type="resolution" value="1.55 A"/>
    <property type="chains" value="A/B/C/D=1-428"/>
</dbReference>
<dbReference type="PDB" id="7CP1">
    <property type="method" value="X-ray"/>
    <property type="resolution" value="2.58 A"/>
    <property type="chains" value="A/B=1-428"/>
</dbReference>
<dbReference type="PDB" id="7RB1">
    <property type="method" value="X-ray"/>
    <property type="resolution" value="1.90 A"/>
    <property type="chains" value="A/B/C/D=1-428"/>
</dbReference>
<dbReference type="PDBsum" id="1F61"/>
<dbReference type="PDBsum" id="1F8I"/>
<dbReference type="PDBsum" id="1F8M"/>
<dbReference type="PDBsum" id="5DQL"/>
<dbReference type="PDBsum" id="6C4A"/>
<dbReference type="PDBsum" id="6C4C"/>
<dbReference type="PDBsum" id="6VB9"/>
<dbReference type="PDBsum" id="6WSI"/>
<dbReference type="PDBsum" id="6XPP"/>
<dbReference type="PDBsum" id="7CP1"/>
<dbReference type="PDBsum" id="7RB1"/>
<dbReference type="SMR" id="P9WKK7"/>
<dbReference type="FunCoup" id="P9WKK7">
    <property type="interactions" value="133"/>
</dbReference>
<dbReference type="STRING" id="83332.Rv0467"/>
<dbReference type="BindingDB" id="P9WKK7"/>
<dbReference type="ChEMBL" id="CHEMBL1667699"/>
<dbReference type="DrugBank" id="DB04343">
    <property type="generic name" value="Glyoxylic acid"/>
</dbReference>
<dbReference type="PaxDb" id="83332-Rv0467"/>
<dbReference type="ABCD" id="P9WKK7">
    <property type="antibodies" value="1 sequenced antibody"/>
</dbReference>
<dbReference type="DNASU" id="886291"/>
<dbReference type="GeneID" id="886291"/>
<dbReference type="KEGG" id="mtu:Rv0467"/>
<dbReference type="KEGG" id="mtv:RVBD_0467"/>
<dbReference type="TubercuList" id="Rv0467"/>
<dbReference type="eggNOG" id="COG2224">
    <property type="taxonomic scope" value="Bacteria"/>
</dbReference>
<dbReference type="InParanoid" id="P9WKK7"/>
<dbReference type="OrthoDB" id="8629576at2"/>
<dbReference type="PhylomeDB" id="P9WKK7"/>
<dbReference type="BioCyc" id="MetaCyc:G185E-4594-MONOMER"/>
<dbReference type="BRENDA" id="4.1.3.1">
    <property type="organism ID" value="3445"/>
</dbReference>
<dbReference type="UniPathway" id="UPA00703">
    <property type="reaction ID" value="UER00719"/>
</dbReference>
<dbReference type="EvolutionaryTrace" id="P9WKK7"/>
<dbReference type="Proteomes" id="UP000001584">
    <property type="component" value="Chromosome"/>
</dbReference>
<dbReference type="GO" id="GO:0005829">
    <property type="term" value="C:cytosol"/>
    <property type="evidence" value="ECO:0007005"/>
    <property type="project" value="MTBBASE"/>
</dbReference>
<dbReference type="GO" id="GO:0005576">
    <property type="term" value="C:extracellular region"/>
    <property type="evidence" value="ECO:0000314"/>
    <property type="project" value="CAFA"/>
</dbReference>
<dbReference type="GO" id="GO:0005886">
    <property type="term" value="C:plasma membrane"/>
    <property type="evidence" value="ECO:0007005"/>
    <property type="project" value="MTBBASE"/>
</dbReference>
<dbReference type="GO" id="GO:0004451">
    <property type="term" value="F:isocitrate lyase activity"/>
    <property type="evidence" value="ECO:0000314"/>
    <property type="project" value="MTBBASE"/>
</dbReference>
<dbReference type="GO" id="GO:0046872">
    <property type="term" value="F:metal ion binding"/>
    <property type="evidence" value="ECO:0007669"/>
    <property type="project" value="UniProtKB-KW"/>
</dbReference>
<dbReference type="GO" id="GO:0046421">
    <property type="term" value="F:methylisocitrate lyase activity"/>
    <property type="evidence" value="ECO:0000314"/>
    <property type="project" value="MTBBASE"/>
</dbReference>
<dbReference type="GO" id="GO:0035375">
    <property type="term" value="F:zymogen binding"/>
    <property type="evidence" value="ECO:0000353"/>
    <property type="project" value="CAFA"/>
</dbReference>
<dbReference type="GO" id="GO:0071456">
    <property type="term" value="P:cellular response to hypoxia"/>
    <property type="evidence" value="ECO:0000270"/>
    <property type="project" value="MTBBASE"/>
</dbReference>
<dbReference type="GO" id="GO:0006097">
    <property type="term" value="P:glyoxylate cycle"/>
    <property type="evidence" value="ECO:0000314"/>
    <property type="project" value="MTBBASE"/>
</dbReference>
<dbReference type="GO" id="GO:0006102">
    <property type="term" value="P:isocitrate metabolic process"/>
    <property type="evidence" value="ECO:0000314"/>
    <property type="project" value="MTBBASE"/>
</dbReference>
<dbReference type="GO" id="GO:0006099">
    <property type="term" value="P:tricarboxylic acid cycle"/>
    <property type="evidence" value="ECO:0007669"/>
    <property type="project" value="UniProtKB-KW"/>
</dbReference>
<dbReference type="CDD" id="cd06556">
    <property type="entry name" value="ICL_KPHMT"/>
    <property type="match status" value="1"/>
</dbReference>
<dbReference type="FunFam" id="3.20.20.60:FF:000005">
    <property type="entry name" value="Isocitrate lyase"/>
    <property type="match status" value="1"/>
</dbReference>
<dbReference type="Gene3D" id="3.20.20.60">
    <property type="entry name" value="Phosphoenolpyruvate-binding domains"/>
    <property type="match status" value="1"/>
</dbReference>
<dbReference type="InterPro" id="IPR006254">
    <property type="entry name" value="Isocitrate_lyase"/>
</dbReference>
<dbReference type="InterPro" id="IPR018523">
    <property type="entry name" value="Isocitrate_lyase_ph_CS"/>
</dbReference>
<dbReference type="InterPro" id="IPR015813">
    <property type="entry name" value="Pyrv/PenolPyrv_kinase-like_dom"/>
</dbReference>
<dbReference type="InterPro" id="IPR040442">
    <property type="entry name" value="Pyrv_kinase-like_dom_sf"/>
</dbReference>
<dbReference type="NCBIfam" id="TIGR01346">
    <property type="entry name" value="isocit_lyase"/>
    <property type="match status" value="2"/>
</dbReference>
<dbReference type="NCBIfam" id="NF011645">
    <property type="entry name" value="PRK15063.1"/>
    <property type="match status" value="1"/>
</dbReference>
<dbReference type="PANTHER" id="PTHR21631:SF3">
    <property type="entry name" value="BIFUNCTIONAL GLYOXYLATE CYCLE PROTEIN"/>
    <property type="match status" value="1"/>
</dbReference>
<dbReference type="PANTHER" id="PTHR21631">
    <property type="entry name" value="ISOCITRATE LYASE/MALATE SYNTHASE"/>
    <property type="match status" value="1"/>
</dbReference>
<dbReference type="Pfam" id="PF00463">
    <property type="entry name" value="ICL"/>
    <property type="match status" value="2"/>
</dbReference>
<dbReference type="PIRSF" id="PIRSF001362">
    <property type="entry name" value="Isocit_lyase"/>
    <property type="match status" value="1"/>
</dbReference>
<dbReference type="SUPFAM" id="SSF51621">
    <property type="entry name" value="Phosphoenolpyruvate/pyruvate domain"/>
    <property type="match status" value="1"/>
</dbReference>
<dbReference type="PROSITE" id="PS00161">
    <property type="entry name" value="ISOCITRATE_LYASE"/>
    <property type="match status" value="1"/>
</dbReference>
<keyword id="KW-0002">3D-structure</keyword>
<keyword id="KW-0329">Glyoxylate bypass</keyword>
<keyword id="KW-1017">Isopeptide bond</keyword>
<keyword id="KW-0456">Lyase</keyword>
<keyword id="KW-0460">Magnesium</keyword>
<keyword id="KW-0464">Manganese</keyword>
<keyword id="KW-0479">Metal-binding</keyword>
<keyword id="KW-1185">Reference proteome</keyword>
<keyword id="KW-0816">Tricarboxylic acid cycle</keyword>
<keyword id="KW-0832">Ubl conjugation</keyword>
<sequence length="428" mass="47087">MSVVGTPKSAEQIQQEWDTNPRWKDVTRTYSAEDVVALQGSVVEEHTLARRGAEVLWEQLHDLEWVNALGALTGNMAVQQVRAGLKAIYLSGWQVAGDANLSGHTYPDQSLYPANSVPQVVRRINNALQRADQIAKIEGDTSVENWLAPIVADGEAGFGGALNVYELQKALIAAGVAGSHWEDQLASEKKCGHLGGKVLIPTQQHIRTLTSARLAADVADVPTVVIARTDAEAATLITSDVDERDQPFITGERTREGFYRTKNGIEPCIARAKAYAPFADLIWMETGTPDLEAARQFSEAVKAEYPDQMLAYNCSPSFNWKKHLDDATIAKFQKELAAMGFKFQFITLAGFHALNYSMFDLAYGYAQNQMSAYVELQEREFAAEERGYTATKHQREVGAGYFDRIATTVDPNSSTTALTGSTEEGQFH</sequence>
<gene>
    <name type="primary">icl</name>
    <name type="ordered locus">Rv0467</name>
    <name type="ORF">MTV038.11</name>
</gene>